<reference key="1">
    <citation type="submission" date="2008-10" db="EMBL/GenBank/DDBJ databases">
        <title>Genome sequence of Clostridium botulinum A2 Kyoto.</title>
        <authorList>
            <person name="Shrivastava S."/>
            <person name="Brinkac L.M."/>
            <person name="Brown J.L."/>
            <person name="Bruce D."/>
            <person name="Detter C.C."/>
            <person name="Johnson E.A."/>
            <person name="Munk C.A."/>
            <person name="Smith L.A."/>
            <person name="Smith T.J."/>
            <person name="Sutton G."/>
            <person name="Brettin T.S."/>
        </authorList>
    </citation>
    <scope>NUCLEOTIDE SEQUENCE [LARGE SCALE GENOMIC DNA]</scope>
    <source>
        <strain>Kyoto / Type A2</strain>
    </source>
</reference>
<evidence type="ECO:0000255" key="1">
    <source>
        <dbReference type="HAMAP-Rule" id="MF_00480"/>
    </source>
</evidence>
<evidence type="ECO:0000305" key="2"/>
<feature type="chain" id="PRO_1000135592" description="Small ribosomal subunit protein uS7">
    <location>
        <begin position="1"/>
        <end position="156"/>
    </location>
</feature>
<protein>
    <recommendedName>
        <fullName evidence="1">Small ribosomal subunit protein uS7</fullName>
    </recommendedName>
    <alternativeName>
        <fullName evidence="2">30S ribosomal protein S7</fullName>
    </alternativeName>
</protein>
<gene>
    <name evidence="1" type="primary">rpsG</name>
    <name type="ordered locus">CLM_3952</name>
</gene>
<dbReference type="EMBL" id="CP001581">
    <property type="protein sequence ID" value="ACO85121.1"/>
    <property type="molecule type" value="Genomic_DNA"/>
</dbReference>
<dbReference type="RefSeq" id="WP_003357613.1">
    <property type="nucleotide sequence ID" value="NC_012563.1"/>
</dbReference>
<dbReference type="SMR" id="C1FMV5"/>
<dbReference type="GeneID" id="92940254"/>
<dbReference type="KEGG" id="cby:CLM_3952"/>
<dbReference type="eggNOG" id="COG0049">
    <property type="taxonomic scope" value="Bacteria"/>
</dbReference>
<dbReference type="HOGENOM" id="CLU_072226_1_1_9"/>
<dbReference type="Proteomes" id="UP000001374">
    <property type="component" value="Chromosome"/>
</dbReference>
<dbReference type="GO" id="GO:0015935">
    <property type="term" value="C:small ribosomal subunit"/>
    <property type="evidence" value="ECO:0007669"/>
    <property type="project" value="InterPro"/>
</dbReference>
<dbReference type="GO" id="GO:0019843">
    <property type="term" value="F:rRNA binding"/>
    <property type="evidence" value="ECO:0007669"/>
    <property type="project" value="UniProtKB-UniRule"/>
</dbReference>
<dbReference type="GO" id="GO:0003735">
    <property type="term" value="F:structural constituent of ribosome"/>
    <property type="evidence" value="ECO:0007669"/>
    <property type="project" value="InterPro"/>
</dbReference>
<dbReference type="GO" id="GO:0000049">
    <property type="term" value="F:tRNA binding"/>
    <property type="evidence" value="ECO:0007669"/>
    <property type="project" value="UniProtKB-UniRule"/>
</dbReference>
<dbReference type="GO" id="GO:0006412">
    <property type="term" value="P:translation"/>
    <property type="evidence" value="ECO:0007669"/>
    <property type="project" value="UniProtKB-UniRule"/>
</dbReference>
<dbReference type="CDD" id="cd14869">
    <property type="entry name" value="uS7_Bacteria"/>
    <property type="match status" value="1"/>
</dbReference>
<dbReference type="FunFam" id="1.10.455.10:FF:000001">
    <property type="entry name" value="30S ribosomal protein S7"/>
    <property type="match status" value="1"/>
</dbReference>
<dbReference type="Gene3D" id="1.10.455.10">
    <property type="entry name" value="Ribosomal protein S7 domain"/>
    <property type="match status" value="1"/>
</dbReference>
<dbReference type="HAMAP" id="MF_00480_B">
    <property type="entry name" value="Ribosomal_uS7_B"/>
    <property type="match status" value="1"/>
</dbReference>
<dbReference type="InterPro" id="IPR000235">
    <property type="entry name" value="Ribosomal_uS7"/>
</dbReference>
<dbReference type="InterPro" id="IPR005717">
    <property type="entry name" value="Ribosomal_uS7_bac/org-type"/>
</dbReference>
<dbReference type="InterPro" id="IPR020606">
    <property type="entry name" value="Ribosomal_uS7_CS"/>
</dbReference>
<dbReference type="InterPro" id="IPR023798">
    <property type="entry name" value="Ribosomal_uS7_dom"/>
</dbReference>
<dbReference type="InterPro" id="IPR036823">
    <property type="entry name" value="Ribosomal_uS7_dom_sf"/>
</dbReference>
<dbReference type="NCBIfam" id="TIGR01029">
    <property type="entry name" value="rpsG_bact"/>
    <property type="match status" value="1"/>
</dbReference>
<dbReference type="PANTHER" id="PTHR11205">
    <property type="entry name" value="RIBOSOMAL PROTEIN S7"/>
    <property type="match status" value="1"/>
</dbReference>
<dbReference type="Pfam" id="PF00177">
    <property type="entry name" value="Ribosomal_S7"/>
    <property type="match status" value="1"/>
</dbReference>
<dbReference type="PIRSF" id="PIRSF002122">
    <property type="entry name" value="RPS7p_RPS7a_RPS5e_RPS7o"/>
    <property type="match status" value="1"/>
</dbReference>
<dbReference type="SUPFAM" id="SSF47973">
    <property type="entry name" value="Ribosomal protein S7"/>
    <property type="match status" value="1"/>
</dbReference>
<dbReference type="PROSITE" id="PS00052">
    <property type="entry name" value="RIBOSOMAL_S7"/>
    <property type="match status" value="1"/>
</dbReference>
<name>RS7_CLOBJ</name>
<keyword id="KW-0687">Ribonucleoprotein</keyword>
<keyword id="KW-0689">Ribosomal protein</keyword>
<keyword id="KW-0694">RNA-binding</keyword>
<keyword id="KW-0699">rRNA-binding</keyword>
<keyword id="KW-0820">tRNA-binding</keyword>
<comment type="function">
    <text evidence="1">One of the primary rRNA binding proteins, it binds directly to 16S rRNA where it nucleates assembly of the head domain of the 30S subunit. Is located at the subunit interface close to the decoding center, probably blocks exit of the E-site tRNA.</text>
</comment>
<comment type="subunit">
    <text evidence="1">Part of the 30S ribosomal subunit. Contacts proteins S9 and S11.</text>
</comment>
<comment type="similarity">
    <text evidence="1">Belongs to the universal ribosomal protein uS7 family.</text>
</comment>
<accession>C1FMV5</accession>
<organism>
    <name type="scientific">Clostridium botulinum (strain Kyoto / Type A2)</name>
    <dbReference type="NCBI Taxonomy" id="536232"/>
    <lineage>
        <taxon>Bacteria</taxon>
        <taxon>Bacillati</taxon>
        <taxon>Bacillota</taxon>
        <taxon>Clostridia</taxon>
        <taxon>Eubacteriales</taxon>
        <taxon>Clostridiaceae</taxon>
        <taxon>Clostridium</taxon>
    </lineage>
</organism>
<proteinExistence type="inferred from homology"/>
<sequence length="156" mass="17714">MPRKGHIAKRDVLPDPLYNSKVVTKLINSIMLDGKRGVAQKICYDAFEIIAEKSGKDAMEVFETAMNNIMPLLEVKARRIGGATYQVPIEVRPERRQTLGIRWMLIAARKRGERSMRERLAGELLDASNNTGAAVKKREDTHKMAEANKAFAHYRY</sequence>